<dbReference type="EC" id="3.1.26.4"/>
<dbReference type="EMBL" id="AE001273">
    <property type="protein sequence ID" value="AAC67619.1"/>
    <property type="molecule type" value="Genomic_DNA"/>
</dbReference>
<dbReference type="PIR" id="H71566">
    <property type="entry name" value="H71566"/>
</dbReference>
<dbReference type="RefSeq" id="WP_009871376.1">
    <property type="nucleotide sequence ID" value="NC_000117.1"/>
</dbReference>
<dbReference type="SMR" id="O84032"/>
<dbReference type="FunCoup" id="O84032">
    <property type="interactions" value="258"/>
</dbReference>
<dbReference type="STRING" id="272561.CT_029"/>
<dbReference type="EnsemblBacteria" id="AAC67619">
    <property type="protein sequence ID" value="AAC67619"/>
    <property type="gene ID" value="CT_029"/>
</dbReference>
<dbReference type="KEGG" id="ctr:CT_029"/>
<dbReference type="PATRIC" id="fig|272561.5.peg.34"/>
<dbReference type="HOGENOM" id="CLU_036532_2_1_0"/>
<dbReference type="InParanoid" id="O84032"/>
<dbReference type="OrthoDB" id="9803420at2"/>
<dbReference type="Proteomes" id="UP000000431">
    <property type="component" value="Chromosome"/>
</dbReference>
<dbReference type="GO" id="GO:0005737">
    <property type="term" value="C:cytoplasm"/>
    <property type="evidence" value="ECO:0007669"/>
    <property type="project" value="UniProtKB-SubCell"/>
</dbReference>
<dbReference type="GO" id="GO:0032299">
    <property type="term" value="C:ribonuclease H2 complex"/>
    <property type="evidence" value="ECO:0000318"/>
    <property type="project" value="GO_Central"/>
</dbReference>
<dbReference type="GO" id="GO:0030145">
    <property type="term" value="F:manganese ion binding"/>
    <property type="evidence" value="ECO:0007669"/>
    <property type="project" value="UniProtKB-UniRule"/>
</dbReference>
<dbReference type="GO" id="GO:0003723">
    <property type="term" value="F:RNA binding"/>
    <property type="evidence" value="ECO:0007669"/>
    <property type="project" value="InterPro"/>
</dbReference>
<dbReference type="GO" id="GO:0004523">
    <property type="term" value="F:RNA-DNA hybrid ribonuclease activity"/>
    <property type="evidence" value="ECO:0000318"/>
    <property type="project" value="GO_Central"/>
</dbReference>
<dbReference type="GO" id="GO:0043137">
    <property type="term" value="P:DNA replication, removal of RNA primer"/>
    <property type="evidence" value="ECO:0000318"/>
    <property type="project" value="GO_Central"/>
</dbReference>
<dbReference type="GO" id="GO:0006298">
    <property type="term" value="P:mismatch repair"/>
    <property type="evidence" value="ECO:0000318"/>
    <property type="project" value="GO_Central"/>
</dbReference>
<dbReference type="CDD" id="cd07182">
    <property type="entry name" value="RNase_HII_bacteria_HII_like"/>
    <property type="match status" value="1"/>
</dbReference>
<dbReference type="FunFam" id="3.30.420.10:FF:000006">
    <property type="entry name" value="Ribonuclease HII"/>
    <property type="match status" value="1"/>
</dbReference>
<dbReference type="Gene3D" id="3.30.420.10">
    <property type="entry name" value="Ribonuclease H-like superfamily/Ribonuclease H"/>
    <property type="match status" value="1"/>
</dbReference>
<dbReference type="HAMAP" id="MF_00052_B">
    <property type="entry name" value="RNase_HII_B"/>
    <property type="match status" value="1"/>
</dbReference>
<dbReference type="InterPro" id="IPR022898">
    <property type="entry name" value="RNase_HII"/>
</dbReference>
<dbReference type="InterPro" id="IPR001352">
    <property type="entry name" value="RNase_HII/HIII"/>
</dbReference>
<dbReference type="InterPro" id="IPR024567">
    <property type="entry name" value="RNase_HII/HIII_dom"/>
</dbReference>
<dbReference type="InterPro" id="IPR012337">
    <property type="entry name" value="RNaseH-like_sf"/>
</dbReference>
<dbReference type="InterPro" id="IPR036397">
    <property type="entry name" value="RNaseH_sf"/>
</dbReference>
<dbReference type="NCBIfam" id="NF000594">
    <property type="entry name" value="PRK00015.1-1"/>
    <property type="match status" value="1"/>
</dbReference>
<dbReference type="NCBIfam" id="NF000595">
    <property type="entry name" value="PRK00015.1-3"/>
    <property type="match status" value="1"/>
</dbReference>
<dbReference type="PANTHER" id="PTHR10954">
    <property type="entry name" value="RIBONUCLEASE H2 SUBUNIT A"/>
    <property type="match status" value="1"/>
</dbReference>
<dbReference type="PANTHER" id="PTHR10954:SF18">
    <property type="entry name" value="RIBONUCLEASE HII"/>
    <property type="match status" value="1"/>
</dbReference>
<dbReference type="Pfam" id="PF01351">
    <property type="entry name" value="RNase_HII"/>
    <property type="match status" value="1"/>
</dbReference>
<dbReference type="SUPFAM" id="SSF53098">
    <property type="entry name" value="Ribonuclease H-like"/>
    <property type="match status" value="1"/>
</dbReference>
<dbReference type="PROSITE" id="PS51975">
    <property type="entry name" value="RNASE_H_2"/>
    <property type="match status" value="1"/>
</dbReference>
<feature type="chain" id="PRO_0000111562" description="Ribonuclease HII">
    <location>
        <begin position="1"/>
        <end position="217"/>
    </location>
</feature>
<feature type="domain" description="RNase H type-2" evidence="2">
    <location>
        <begin position="27"/>
        <end position="216"/>
    </location>
</feature>
<feature type="binding site" evidence="1">
    <location>
        <position position="33"/>
    </location>
    <ligand>
        <name>a divalent metal cation</name>
        <dbReference type="ChEBI" id="CHEBI:60240"/>
    </ligand>
</feature>
<feature type="binding site" evidence="1">
    <location>
        <position position="34"/>
    </location>
    <ligand>
        <name>a divalent metal cation</name>
        <dbReference type="ChEBI" id="CHEBI:60240"/>
    </ligand>
</feature>
<feature type="binding site" evidence="1">
    <location>
        <position position="126"/>
    </location>
    <ligand>
        <name>a divalent metal cation</name>
        <dbReference type="ChEBI" id="CHEBI:60240"/>
    </ligand>
</feature>
<protein>
    <recommendedName>
        <fullName>Ribonuclease HII</fullName>
        <shortName>RNase HII</shortName>
        <ecNumber>3.1.26.4</ecNumber>
    </recommendedName>
</protein>
<comment type="function">
    <text evidence="1">Endonuclease that specifically degrades the RNA of RNA-DNA hybrids.</text>
</comment>
<comment type="catalytic activity">
    <reaction>
        <text>Endonucleolytic cleavage to 5'-phosphomonoester.</text>
        <dbReference type="EC" id="3.1.26.4"/>
    </reaction>
</comment>
<comment type="cofactor">
    <cofactor evidence="1">
        <name>Mn(2+)</name>
        <dbReference type="ChEBI" id="CHEBI:29035"/>
    </cofactor>
    <cofactor evidence="1">
        <name>Mg(2+)</name>
        <dbReference type="ChEBI" id="CHEBI:18420"/>
    </cofactor>
    <text evidence="1">Manganese or magnesium. Binds 1 divalent metal ion per monomer in the absence of substrate. May bind a second metal ion after substrate binding.</text>
</comment>
<comment type="subcellular location">
    <subcellularLocation>
        <location evidence="3">Cytoplasm</location>
    </subcellularLocation>
</comment>
<comment type="similarity">
    <text evidence="3">Belongs to the RNase HII family.</text>
</comment>
<reference key="1">
    <citation type="journal article" date="1998" name="Science">
        <title>Genome sequence of an obligate intracellular pathogen of humans: Chlamydia trachomatis.</title>
        <authorList>
            <person name="Stephens R.S."/>
            <person name="Kalman S."/>
            <person name="Lammel C.J."/>
            <person name="Fan J."/>
            <person name="Marathe R."/>
            <person name="Aravind L."/>
            <person name="Mitchell W.P."/>
            <person name="Olinger L."/>
            <person name="Tatusov R.L."/>
            <person name="Zhao Q."/>
            <person name="Koonin E.V."/>
            <person name="Davis R.W."/>
        </authorList>
    </citation>
    <scope>NUCLEOTIDE SEQUENCE [LARGE SCALE GENOMIC DNA]</scope>
    <source>
        <strain>ATCC VR-885 / DSM 19411 / UW-3/Cx</strain>
    </source>
</reference>
<evidence type="ECO:0000250" key="1"/>
<evidence type="ECO:0000255" key="2">
    <source>
        <dbReference type="PROSITE-ProRule" id="PRU01319"/>
    </source>
</evidence>
<evidence type="ECO:0000305" key="3"/>
<accession>O84032</accession>
<sequence>MKSTVEQAMLFEEKSIFENQAIEQGYSQVAGVDEAGRGPLAGPVVAGACILPRGKVFLGIDDSKKLTPKQRRYLYELLLEDPEVDCGVGVISVERIDEINILEATKEAMVQAIASLRSTPDFLLVDGLFLPHKVPSLKIIKGDARSVSIAAASIIAKEYRDELMRKLHVEYPEYGFDKHKGYGTAAHLQALKHFGPCVYHRKSFSPVKESIQEGVCQ</sequence>
<proteinExistence type="inferred from homology"/>
<organism>
    <name type="scientific">Chlamydia trachomatis serovar D (strain ATCC VR-885 / DSM 19411 / UW-3/Cx)</name>
    <dbReference type="NCBI Taxonomy" id="272561"/>
    <lineage>
        <taxon>Bacteria</taxon>
        <taxon>Pseudomonadati</taxon>
        <taxon>Chlamydiota</taxon>
        <taxon>Chlamydiia</taxon>
        <taxon>Chlamydiales</taxon>
        <taxon>Chlamydiaceae</taxon>
        <taxon>Chlamydia/Chlamydophila group</taxon>
        <taxon>Chlamydia</taxon>
    </lineage>
</organism>
<gene>
    <name type="primary">rnhB</name>
    <name type="ordered locus">CT_029</name>
</gene>
<keyword id="KW-0963">Cytoplasm</keyword>
<keyword id="KW-0255">Endonuclease</keyword>
<keyword id="KW-0378">Hydrolase</keyword>
<keyword id="KW-0464">Manganese</keyword>
<keyword id="KW-0479">Metal-binding</keyword>
<keyword id="KW-0540">Nuclease</keyword>
<keyword id="KW-1185">Reference proteome</keyword>
<name>RNH2_CHLTR</name>